<keyword id="KW-0167">Capsid protein</keyword>
<keyword id="KW-1035">Host cytoplasm</keyword>
<keyword id="KW-1152">Outer capsid protein</keyword>
<keyword id="KW-0946">Virion</keyword>
<proteinExistence type="evidence at transcript level"/>
<dbReference type="EMBL" id="M77020">
    <property type="protein sequence ID" value="AAA48500.1"/>
    <property type="molecule type" value="mRNA"/>
</dbReference>
<dbReference type="PIR" id="C41705">
    <property type="entry name" value="QMXRWN"/>
</dbReference>
<dbReference type="GO" id="GO:0030430">
    <property type="term" value="C:host cell cytoplasm"/>
    <property type="evidence" value="ECO:0007669"/>
    <property type="project" value="UniProtKB-SubCell"/>
</dbReference>
<dbReference type="GO" id="GO:0039624">
    <property type="term" value="C:viral outer capsid"/>
    <property type="evidence" value="ECO:0007669"/>
    <property type="project" value="UniProtKB-KW"/>
</dbReference>
<dbReference type="InterPro" id="IPR008776">
    <property type="entry name" value="Phyto_Pns9_10"/>
</dbReference>
<dbReference type="Pfam" id="PF05878">
    <property type="entry name" value="Phyto_Pns9_10"/>
    <property type="match status" value="1"/>
</dbReference>
<organismHost>
    <name type="scientific">Catharanthus roseus</name>
    <name type="common">Madagascar periwinkle</name>
    <name type="synonym">Vinca rosea</name>
    <dbReference type="NCBI Taxonomy" id="4058"/>
</organismHost>
<organismHost>
    <name type="scientific">Melilotus officinalis</name>
    <name type="common">Yellow sweet clover</name>
    <name type="synonym">Trifolium officinale</name>
    <dbReference type="NCBI Taxonomy" id="47083"/>
</organismHost>
<organismHost>
    <name type="scientific">Trifolium incarnatum</name>
    <name type="common">Crimson clover</name>
    <dbReference type="NCBI Taxonomy" id="60916"/>
</organismHost>
<reference key="1">
    <citation type="journal article" date="1991" name="Virology">
        <title>First field isolation of wound tumor virus from a plant host: minimal sequence divergence from the type strain isolated from an insect vector.</title>
        <authorList>
            <person name="Hillman B.I."/>
            <person name="Anzola J.V."/>
            <person name="Halpern B.T."/>
            <person name="Cavileer T.D."/>
            <person name="Nuss D.L."/>
        </authorList>
    </citation>
    <scope>NUCLEOTIDE SEQUENCE [MRNA]</scope>
</reference>
<feature type="chain" id="PRO_0000222770" description="Minor outer capsid protein P9">
    <location>
        <begin position="1"/>
        <end position="313"/>
    </location>
</feature>
<protein>
    <recommendedName>
        <fullName>Minor outer capsid protein P9</fullName>
    </recommendedName>
    <alternativeName>
        <fullName>Non-structural protein 11</fullName>
        <shortName>Pns11</shortName>
    </alternativeName>
</protein>
<sequence>MSGKIQDGVAIRRMSDAILFFTNYTSRNLIDQRDITLSTLHTIRRNLGTCWSIALLNCWNETSSHAGVMRFILDIAFSLRFGDFTMLGACGNVDPFDDAGQIFLKSCKATGRNDSCFLTPSDNFGYYLVSFLNKEQLKCVVDMNVGIHNIEDIYVTRMESIMEFIYYYYTESGRDVVNWLEKLESADAGLAAHAKSKRLMRAEIDLIRREILERTRLFINSNRNSFHDHHRELVRRYRTIWADVISDGDVAEETSTEATTSAQHSTALSAELDEVDEYDHPNDGLLTFRREEDAASNLDSLLGSLSGEDAFQG</sequence>
<accession>P31611</accession>
<organism>
    <name type="scientific">Wound tumor virus (strain NJ)</name>
    <name type="common">WTV</name>
    <dbReference type="NCBI Taxonomy" id="31595"/>
    <lineage>
        <taxon>Viruses</taxon>
        <taxon>Riboviria</taxon>
        <taxon>Orthornavirae</taxon>
        <taxon>Duplornaviricota</taxon>
        <taxon>Resentoviricetes</taxon>
        <taxon>Reovirales</taxon>
        <taxon>Sedoreoviridae</taxon>
        <taxon>Phytoreovirus</taxon>
        <taxon>Wound tumor virus</taxon>
    </lineage>
</organism>
<name>P9_WTVNJ</name>
<comment type="function">
    <text evidence="1">Minor outer capsid protein.</text>
</comment>
<comment type="subcellular location">
    <subcellularLocation>
        <location evidence="2">Virion</location>
    </subcellularLocation>
    <subcellularLocation>
        <location evidence="1">Host cytoplasm</location>
    </subcellularLocation>
    <text evidence="1">Found in the peripheral regions of spherical cytoplasmic structures, called virus factories, that appear early after infection and are the site of viral replication and packaging.</text>
</comment>
<comment type="similarity">
    <text evidence="2">Belongs to the phytoreovirus minor outer capsid protein P9 family.</text>
</comment>
<evidence type="ECO:0000250" key="1"/>
<evidence type="ECO:0000305" key="2"/>